<organism>
    <name type="scientific">Escherichia coli O6:H1 (strain CFT073 / ATCC 700928 / UPEC)</name>
    <dbReference type="NCBI Taxonomy" id="199310"/>
    <lineage>
        <taxon>Bacteria</taxon>
        <taxon>Pseudomonadati</taxon>
        <taxon>Pseudomonadota</taxon>
        <taxon>Gammaproteobacteria</taxon>
        <taxon>Enterobacterales</taxon>
        <taxon>Enterobacteriaceae</taxon>
        <taxon>Escherichia</taxon>
    </lineage>
</organism>
<comment type="function">
    <text evidence="1">NDH-1 shuttles electrons from NADH, via FMN and iron-sulfur (Fe-S) centers, to quinones in the respiratory chain. The immediate electron acceptor for the enzyme in this species is believed to be ubiquinone. Couples the redox reaction to proton translocation (for every two electrons transferred, four hydrogen ions are translocated across the cytoplasmic membrane), and thus conserves the redox energy in a proton gradient.</text>
</comment>
<comment type="catalytic activity">
    <reaction evidence="1">
        <text>a quinone + NADH + 5 H(+)(in) = a quinol + NAD(+) + 4 H(+)(out)</text>
        <dbReference type="Rhea" id="RHEA:57888"/>
        <dbReference type="ChEBI" id="CHEBI:15378"/>
        <dbReference type="ChEBI" id="CHEBI:24646"/>
        <dbReference type="ChEBI" id="CHEBI:57540"/>
        <dbReference type="ChEBI" id="CHEBI:57945"/>
        <dbReference type="ChEBI" id="CHEBI:132124"/>
    </reaction>
</comment>
<comment type="subunit">
    <text evidence="1">NDH-1 is composed of 13 different subunits. Subunits NuoA, H, J, K, L, M, N constitute the membrane sector of the complex.</text>
</comment>
<comment type="subcellular location">
    <subcellularLocation>
        <location evidence="1">Cell inner membrane</location>
        <topology evidence="1">Multi-pass membrane protein</topology>
    </subcellularLocation>
</comment>
<comment type="similarity">
    <text evidence="1">Belongs to the complex I subunit 3 family.</text>
</comment>
<sequence length="147" mass="16457">MSMSTSTEVIAHHWAFAIFLIVAIGLCCLMLVGGWFLGGRARARSKNVPFESGIDSVGSARLRLSAKFYLVAMFFVIFDVEALYLFAWSTSIRESGWVGFVEAAIFIFVLLAGLVYLVRIGALDWTPARSRRERMNPETNSIANRQR</sequence>
<reference key="1">
    <citation type="journal article" date="2002" name="Proc. Natl. Acad. Sci. U.S.A.">
        <title>Extensive mosaic structure revealed by the complete genome sequence of uropathogenic Escherichia coli.</title>
        <authorList>
            <person name="Welch R.A."/>
            <person name="Burland V."/>
            <person name="Plunkett G. III"/>
            <person name="Redford P."/>
            <person name="Roesch P."/>
            <person name="Rasko D."/>
            <person name="Buckles E.L."/>
            <person name="Liou S.-R."/>
            <person name="Boutin A."/>
            <person name="Hackett J."/>
            <person name="Stroud D."/>
            <person name="Mayhew G.F."/>
            <person name="Rose D.J."/>
            <person name="Zhou S."/>
            <person name="Schwartz D.C."/>
            <person name="Perna N.T."/>
            <person name="Mobley H.L.T."/>
            <person name="Donnenberg M.S."/>
            <person name="Blattner F.R."/>
        </authorList>
    </citation>
    <scope>NUCLEOTIDE SEQUENCE [LARGE SCALE GENOMIC DNA]</scope>
    <source>
        <strain>CFT073 / ATCC 700928 / UPEC</strain>
    </source>
</reference>
<accession>P0AFC4</accession>
<accession>P33597</accession>
<accession>P77159</accession>
<keyword id="KW-0997">Cell inner membrane</keyword>
<keyword id="KW-1003">Cell membrane</keyword>
<keyword id="KW-0472">Membrane</keyword>
<keyword id="KW-0520">NAD</keyword>
<keyword id="KW-0874">Quinone</keyword>
<keyword id="KW-1185">Reference proteome</keyword>
<keyword id="KW-1278">Translocase</keyword>
<keyword id="KW-0812">Transmembrane</keyword>
<keyword id="KW-1133">Transmembrane helix</keyword>
<keyword id="KW-0813">Transport</keyword>
<keyword id="KW-0830">Ubiquinone</keyword>
<dbReference type="EC" id="7.1.1.-" evidence="1"/>
<dbReference type="EMBL" id="AE014075">
    <property type="protein sequence ID" value="AAN81283.1"/>
    <property type="molecule type" value="Genomic_DNA"/>
</dbReference>
<dbReference type="RefSeq" id="WP_000062997.1">
    <property type="nucleotide sequence ID" value="NZ_CP051263.1"/>
</dbReference>
<dbReference type="SMR" id="P0AFC4"/>
<dbReference type="STRING" id="199310.c2829"/>
<dbReference type="GeneID" id="93774886"/>
<dbReference type="KEGG" id="ecc:c2829"/>
<dbReference type="eggNOG" id="COG0838">
    <property type="taxonomic scope" value="Bacteria"/>
</dbReference>
<dbReference type="HOGENOM" id="CLU_119549_2_0_6"/>
<dbReference type="BioCyc" id="ECOL199310:C2829-MONOMER"/>
<dbReference type="Proteomes" id="UP000001410">
    <property type="component" value="Chromosome"/>
</dbReference>
<dbReference type="GO" id="GO:0030964">
    <property type="term" value="C:NADH dehydrogenase complex"/>
    <property type="evidence" value="ECO:0007669"/>
    <property type="project" value="TreeGrafter"/>
</dbReference>
<dbReference type="GO" id="GO:0005886">
    <property type="term" value="C:plasma membrane"/>
    <property type="evidence" value="ECO:0007669"/>
    <property type="project" value="UniProtKB-SubCell"/>
</dbReference>
<dbReference type="GO" id="GO:0008137">
    <property type="term" value="F:NADH dehydrogenase (ubiquinone) activity"/>
    <property type="evidence" value="ECO:0007669"/>
    <property type="project" value="InterPro"/>
</dbReference>
<dbReference type="GO" id="GO:0050136">
    <property type="term" value="F:NADH:ubiquinone reductase (non-electrogenic) activity"/>
    <property type="evidence" value="ECO:0007669"/>
    <property type="project" value="UniProtKB-UniRule"/>
</dbReference>
<dbReference type="GO" id="GO:0048038">
    <property type="term" value="F:quinone binding"/>
    <property type="evidence" value="ECO:0007669"/>
    <property type="project" value="UniProtKB-KW"/>
</dbReference>
<dbReference type="FunFam" id="1.20.58.1610:FF:000003">
    <property type="entry name" value="NADH-quinone oxidoreductase subunit A"/>
    <property type="match status" value="1"/>
</dbReference>
<dbReference type="Gene3D" id="1.20.58.1610">
    <property type="entry name" value="NADH:ubiquinone/plastoquinone oxidoreductase, chain 3"/>
    <property type="match status" value="1"/>
</dbReference>
<dbReference type="HAMAP" id="MF_01394">
    <property type="entry name" value="NDH1_NuoA"/>
    <property type="match status" value="1"/>
</dbReference>
<dbReference type="InterPro" id="IPR023043">
    <property type="entry name" value="NAD(P)H_OxRDtase_bac/plastid"/>
</dbReference>
<dbReference type="InterPro" id="IPR000440">
    <property type="entry name" value="NADH_UbQ/plastoQ_OxRdtase_su3"/>
</dbReference>
<dbReference type="InterPro" id="IPR038430">
    <property type="entry name" value="NDAH_ubi_oxred_su3_sf"/>
</dbReference>
<dbReference type="PANTHER" id="PTHR11058:SF21">
    <property type="entry name" value="NADH-QUINONE OXIDOREDUCTASE SUBUNIT A"/>
    <property type="match status" value="1"/>
</dbReference>
<dbReference type="PANTHER" id="PTHR11058">
    <property type="entry name" value="NADH-UBIQUINONE OXIDOREDUCTASE CHAIN 3"/>
    <property type="match status" value="1"/>
</dbReference>
<dbReference type="Pfam" id="PF00507">
    <property type="entry name" value="Oxidored_q4"/>
    <property type="match status" value="1"/>
</dbReference>
<proteinExistence type="inferred from homology"/>
<protein>
    <recommendedName>
        <fullName evidence="1">NADH-quinone oxidoreductase subunit A</fullName>
        <ecNumber evidence="1">7.1.1.-</ecNumber>
    </recommendedName>
    <alternativeName>
        <fullName evidence="1">NADH dehydrogenase I subunit A</fullName>
    </alternativeName>
    <alternativeName>
        <fullName evidence="1">NDH-1 subunit A</fullName>
    </alternativeName>
    <alternativeName>
        <fullName evidence="1">NUO1</fullName>
    </alternativeName>
</protein>
<gene>
    <name evidence="1" type="primary">nuoA</name>
    <name type="ordered locus">c2829</name>
</gene>
<evidence type="ECO:0000255" key="1">
    <source>
        <dbReference type="HAMAP-Rule" id="MF_01394"/>
    </source>
</evidence>
<name>NUOA_ECOL6</name>
<feature type="chain" id="PRO_0000117864" description="NADH-quinone oxidoreductase subunit A">
    <location>
        <begin position="1"/>
        <end position="147"/>
    </location>
</feature>
<feature type="transmembrane region" description="Helical" evidence="1">
    <location>
        <begin position="16"/>
        <end position="36"/>
    </location>
</feature>
<feature type="transmembrane region" description="Helical" evidence="1">
    <location>
        <begin position="68"/>
        <end position="88"/>
    </location>
</feature>
<feature type="transmembrane region" description="Helical" evidence="1">
    <location>
        <begin position="98"/>
        <end position="118"/>
    </location>
</feature>